<evidence type="ECO:0000250" key="1"/>
<evidence type="ECO:0000255" key="2">
    <source>
        <dbReference type="PROSITE-ProRule" id="PRU00147"/>
    </source>
</evidence>
<evidence type="ECO:0000256" key="3">
    <source>
        <dbReference type="SAM" id="MobiDB-lite"/>
    </source>
</evidence>
<evidence type="ECO:0000305" key="4"/>
<comment type="function">
    <text evidence="1">Required for retention of late Golgi membrane proteins. Component of the retrieval machinery that functions by direct interaction with the cytosolic tails of certain TGN membrane proteins during the sorting/budding process at the prevacuolar compartment. Binds phosphatidylinositol 3-phosphate (PtdIns(P3)) (By similarity).</text>
</comment>
<comment type="subcellular location">
    <subcellularLocation>
        <location evidence="1">Cytoplasm</location>
    </subcellularLocation>
    <subcellularLocation>
        <location evidence="4">Golgi apparatus membrane</location>
        <topology evidence="4">Peripheral membrane protein</topology>
        <orientation evidence="4">Cytoplasmic side</orientation>
    </subcellularLocation>
    <subcellularLocation>
        <location evidence="4">Prevacuolar compartment membrane</location>
        <topology evidence="4">Peripheral membrane protein</topology>
        <orientation evidence="4">Cytoplasmic side</orientation>
    </subcellularLocation>
</comment>
<comment type="domain">
    <text evidence="1">The PX domain binds phosphatidylinositol 3-phosphate which is necessary for peripheral membrane localization.</text>
</comment>
<comment type="similarity">
    <text evidence="4">Belongs to the sorting nexin family.</text>
</comment>
<keyword id="KW-0963">Cytoplasm</keyword>
<keyword id="KW-0333">Golgi apparatus</keyword>
<keyword id="KW-0446">Lipid-binding</keyword>
<keyword id="KW-0472">Membrane</keyword>
<keyword id="KW-0653">Protein transport</keyword>
<keyword id="KW-1185">Reference proteome</keyword>
<keyword id="KW-0813">Transport</keyword>
<accession>Q5A748</accession>
<accession>A0A1D8PEA7</accession>
<accession>O94037</accession>
<sequence length="157" mass="18362">MSKPFQPISDVINTSPKNKSQSFNEIYGEPENFLEIEVKNPLTHGYGSNLFTDYEIVCRTNIPAFKKRESRIRRRYSDFVAFRKILEQETTRVIIPPLPGKIFLNSNKFNDLNIEKRRQGLEKFLIVVSGHPLLQTGSKSLIEFIQNEKWDPKQIIY</sequence>
<name>SNX3_CANAL</name>
<proteinExistence type="inferred from homology"/>
<gene>
    <name type="primary">SNX3</name>
    <name type="ordered locus">CAALFM_C108340CA</name>
    <name type="ORF">Ca41C10.03</name>
    <name type="ORF">CaO19.12580</name>
    <name type="ORF">CaO19.5114</name>
</gene>
<reference key="1">
    <citation type="submission" date="1998-11" db="EMBL/GenBank/DDBJ databases">
        <title>Candida albicans strain 1161 genome pilot sequencing project.</title>
        <authorList>
            <person name="Taylor K."/>
            <person name="Harris D."/>
            <person name="Barrell B.G."/>
            <person name="Rajandream M.A."/>
        </authorList>
    </citation>
    <scope>NUCLEOTIDE SEQUENCE [LARGE SCALE GENOMIC DNA]</scope>
    <source>
        <strain>1161</strain>
    </source>
</reference>
<reference key="2">
    <citation type="journal article" date="2004" name="Proc. Natl. Acad. Sci. U.S.A.">
        <title>The diploid genome sequence of Candida albicans.</title>
        <authorList>
            <person name="Jones T."/>
            <person name="Federspiel N.A."/>
            <person name="Chibana H."/>
            <person name="Dungan J."/>
            <person name="Kalman S."/>
            <person name="Magee B.B."/>
            <person name="Newport G."/>
            <person name="Thorstenson Y.R."/>
            <person name="Agabian N."/>
            <person name="Magee P.T."/>
            <person name="Davis R.W."/>
            <person name="Scherer S."/>
        </authorList>
    </citation>
    <scope>NUCLEOTIDE SEQUENCE [LARGE SCALE GENOMIC DNA]</scope>
    <source>
        <strain>SC5314 / ATCC MYA-2876</strain>
    </source>
</reference>
<reference key="3">
    <citation type="journal article" date="2007" name="Genome Biol.">
        <title>Assembly of the Candida albicans genome into sixteen supercontigs aligned on the eight chromosomes.</title>
        <authorList>
            <person name="van het Hoog M."/>
            <person name="Rast T.J."/>
            <person name="Martchenko M."/>
            <person name="Grindle S."/>
            <person name="Dignard D."/>
            <person name="Hogues H."/>
            <person name="Cuomo C."/>
            <person name="Berriman M."/>
            <person name="Scherer S."/>
            <person name="Magee B.B."/>
            <person name="Whiteway M."/>
            <person name="Chibana H."/>
            <person name="Nantel A."/>
            <person name="Magee P.T."/>
        </authorList>
    </citation>
    <scope>GENOME REANNOTATION</scope>
    <source>
        <strain>SC5314 / ATCC MYA-2876</strain>
    </source>
</reference>
<reference key="4">
    <citation type="journal article" date="2013" name="Genome Biol.">
        <title>Assembly of a phased diploid Candida albicans genome facilitates allele-specific measurements and provides a simple model for repeat and indel structure.</title>
        <authorList>
            <person name="Muzzey D."/>
            <person name="Schwartz K."/>
            <person name="Weissman J.S."/>
            <person name="Sherlock G."/>
        </authorList>
    </citation>
    <scope>NUCLEOTIDE SEQUENCE [LARGE SCALE GENOMIC DNA]</scope>
    <scope>GENOME REANNOTATION</scope>
    <source>
        <strain>SC5314 / ATCC MYA-2876</strain>
    </source>
</reference>
<feature type="chain" id="PRO_0000238584" description="Sorting nexin-3">
    <location>
        <begin position="1"/>
        <end position="157"/>
    </location>
</feature>
<feature type="domain" description="PX" evidence="2">
    <location>
        <begin position="32"/>
        <end position="152"/>
    </location>
</feature>
<feature type="region of interest" description="Disordered" evidence="3">
    <location>
        <begin position="1"/>
        <end position="21"/>
    </location>
</feature>
<feature type="compositionally biased region" description="Polar residues" evidence="3">
    <location>
        <begin position="11"/>
        <end position="21"/>
    </location>
</feature>
<feature type="binding site" evidence="1">
    <location>
        <position position="75"/>
    </location>
    <ligand>
        <name>a 1,2-diacyl-sn-glycero-3-phospho-(1D-myo-inositol-3-phosphate)</name>
        <dbReference type="ChEBI" id="CHEBI:58088"/>
    </ligand>
</feature>
<feature type="binding site" evidence="1">
    <location>
        <position position="77"/>
    </location>
    <ligand>
        <name>a 1,2-diacyl-sn-glycero-3-phospho-(1D-myo-inositol-3-phosphate)</name>
        <dbReference type="ChEBI" id="CHEBI:58088"/>
    </ligand>
</feature>
<feature type="binding site" evidence="1">
    <location>
        <position position="101"/>
    </location>
    <ligand>
        <name>a 1,2-diacyl-sn-glycero-3-phospho-(1D-myo-inositol-3-phosphate)</name>
        <dbReference type="ChEBI" id="CHEBI:58088"/>
    </ligand>
</feature>
<feature type="binding site" evidence="1">
    <location>
        <position position="117"/>
    </location>
    <ligand>
        <name>a 1,2-diacyl-sn-glycero-3-phospho-(1D-myo-inositol-3-phosphate)</name>
        <dbReference type="ChEBI" id="CHEBI:58088"/>
    </ligand>
</feature>
<organism>
    <name type="scientific">Candida albicans (strain SC5314 / ATCC MYA-2876)</name>
    <name type="common">Yeast</name>
    <dbReference type="NCBI Taxonomy" id="237561"/>
    <lineage>
        <taxon>Eukaryota</taxon>
        <taxon>Fungi</taxon>
        <taxon>Dikarya</taxon>
        <taxon>Ascomycota</taxon>
        <taxon>Saccharomycotina</taxon>
        <taxon>Pichiomycetes</taxon>
        <taxon>Debaryomycetaceae</taxon>
        <taxon>Candida/Lodderomyces clade</taxon>
        <taxon>Candida</taxon>
    </lineage>
</organism>
<protein>
    <recommendedName>
        <fullName>Sorting nexin-3</fullName>
    </recommendedName>
</protein>
<dbReference type="EMBL" id="AL033501">
    <property type="protein sequence ID" value="CAA21987.1"/>
    <property type="molecule type" value="Genomic_DNA"/>
</dbReference>
<dbReference type="EMBL" id="CP017623">
    <property type="protein sequence ID" value="AOW26472.1"/>
    <property type="molecule type" value="Genomic_DNA"/>
</dbReference>
<dbReference type="PIR" id="T18229">
    <property type="entry name" value="T18229"/>
</dbReference>
<dbReference type="RefSeq" id="XP_717650.2">
    <property type="nucleotide sequence ID" value="XM_712557.2"/>
</dbReference>
<dbReference type="SMR" id="Q5A748"/>
<dbReference type="FunCoup" id="Q5A748">
    <property type="interactions" value="501"/>
</dbReference>
<dbReference type="STRING" id="237561.Q5A748"/>
<dbReference type="EnsemblFungi" id="C1_08340C_A-T">
    <property type="protein sequence ID" value="C1_08340C_A-T-p1"/>
    <property type="gene ID" value="C1_08340C_A"/>
</dbReference>
<dbReference type="GeneID" id="3640752"/>
<dbReference type="KEGG" id="cal:CAALFM_C108340CA"/>
<dbReference type="CGD" id="CAL0000191797">
    <property type="gene designation" value="orf19.12580"/>
</dbReference>
<dbReference type="VEuPathDB" id="FungiDB:C1_08340C_A"/>
<dbReference type="eggNOG" id="KOG2527">
    <property type="taxonomic scope" value="Eukaryota"/>
</dbReference>
<dbReference type="HOGENOM" id="CLU_057172_2_2_1"/>
<dbReference type="InParanoid" id="Q5A748"/>
<dbReference type="OMA" id="NMYTDYE"/>
<dbReference type="OrthoDB" id="5227681at2759"/>
<dbReference type="PRO" id="PR:Q5A748"/>
<dbReference type="Proteomes" id="UP000000559">
    <property type="component" value="Chromosome 1"/>
</dbReference>
<dbReference type="GO" id="GO:0031901">
    <property type="term" value="C:early endosome membrane"/>
    <property type="evidence" value="ECO:0000318"/>
    <property type="project" value="GO_Central"/>
</dbReference>
<dbReference type="GO" id="GO:0000139">
    <property type="term" value="C:Golgi membrane"/>
    <property type="evidence" value="ECO:0007669"/>
    <property type="project" value="UniProtKB-SubCell"/>
</dbReference>
<dbReference type="GO" id="GO:0030904">
    <property type="term" value="C:retromer complex"/>
    <property type="evidence" value="ECO:0000318"/>
    <property type="project" value="GO_Central"/>
</dbReference>
<dbReference type="GO" id="GO:0032266">
    <property type="term" value="F:phosphatidylinositol-3-phosphate binding"/>
    <property type="evidence" value="ECO:0000318"/>
    <property type="project" value="GO_Central"/>
</dbReference>
<dbReference type="GO" id="GO:0032456">
    <property type="term" value="P:endocytic recycling"/>
    <property type="evidence" value="ECO:0000318"/>
    <property type="project" value="GO_Central"/>
</dbReference>
<dbReference type="GO" id="GO:0034499">
    <property type="term" value="P:late endosome to Golgi transport"/>
    <property type="evidence" value="ECO:0000318"/>
    <property type="project" value="GO_Central"/>
</dbReference>
<dbReference type="GO" id="GO:0015031">
    <property type="term" value="P:protein transport"/>
    <property type="evidence" value="ECO:0007669"/>
    <property type="project" value="UniProtKB-KW"/>
</dbReference>
<dbReference type="Gene3D" id="3.30.1520.10">
    <property type="entry name" value="Phox-like domain"/>
    <property type="match status" value="1"/>
</dbReference>
<dbReference type="InterPro" id="IPR001683">
    <property type="entry name" value="PX_dom"/>
</dbReference>
<dbReference type="InterPro" id="IPR036871">
    <property type="entry name" value="PX_dom_sf"/>
</dbReference>
<dbReference type="InterPro" id="IPR051074">
    <property type="entry name" value="Sorting_Nexin"/>
</dbReference>
<dbReference type="PANTHER" id="PTHR45963">
    <property type="entry name" value="RE52028P"/>
    <property type="match status" value="1"/>
</dbReference>
<dbReference type="PANTHER" id="PTHR45963:SF2">
    <property type="entry name" value="RE52028P"/>
    <property type="match status" value="1"/>
</dbReference>
<dbReference type="Pfam" id="PF00787">
    <property type="entry name" value="PX"/>
    <property type="match status" value="1"/>
</dbReference>
<dbReference type="SMART" id="SM00312">
    <property type="entry name" value="PX"/>
    <property type="match status" value="1"/>
</dbReference>
<dbReference type="SUPFAM" id="SSF64268">
    <property type="entry name" value="PX domain"/>
    <property type="match status" value="1"/>
</dbReference>
<dbReference type="PROSITE" id="PS50195">
    <property type="entry name" value="PX"/>
    <property type="match status" value="1"/>
</dbReference>